<dbReference type="EC" id="3.6.4.-" evidence="1"/>
<dbReference type="EMBL" id="AL935263">
    <property type="protein sequence ID" value="CCC79492.1"/>
    <property type="molecule type" value="Genomic_DNA"/>
</dbReference>
<dbReference type="RefSeq" id="WP_003641514.1">
    <property type="nucleotide sequence ID" value="NC_004567.2"/>
</dbReference>
<dbReference type="RefSeq" id="YP_004890006.1">
    <property type="nucleotide sequence ID" value="NC_004567.2"/>
</dbReference>
<dbReference type="SMR" id="Q88V03"/>
<dbReference type="STRING" id="220668.lp_2286"/>
<dbReference type="EnsemblBacteria" id="CCC79492">
    <property type="protein sequence ID" value="CCC79492"/>
    <property type="gene ID" value="lp_2286"/>
</dbReference>
<dbReference type="GeneID" id="89669558"/>
<dbReference type="KEGG" id="lpl:lp_2286"/>
<dbReference type="PATRIC" id="fig|220668.9.peg.1934"/>
<dbReference type="eggNOG" id="COG2255">
    <property type="taxonomic scope" value="Bacteria"/>
</dbReference>
<dbReference type="HOGENOM" id="CLU_055599_1_0_9"/>
<dbReference type="OrthoDB" id="9804478at2"/>
<dbReference type="PhylomeDB" id="Q88V03"/>
<dbReference type="Proteomes" id="UP000000432">
    <property type="component" value="Chromosome"/>
</dbReference>
<dbReference type="GO" id="GO:0005737">
    <property type="term" value="C:cytoplasm"/>
    <property type="evidence" value="ECO:0007669"/>
    <property type="project" value="UniProtKB-SubCell"/>
</dbReference>
<dbReference type="GO" id="GO:0048476">
    <property type="term" value="C:Holliday junction resolvase complex"/>
    <property type="evidence" value="ECO:0007669"/>
    <property type="project" value="UniProtKB-UniRule"/>
</dbReference>
<dbReference type="GO" id="GO:0005524">
    <property type="term" value="F:ATP binding"/>
    <property type="evidence" value="ECO:0007669"/>
    <property type="project" value="UniProtKB-UniRule"/>
</dbReference>
<dbReference type="GO" id="GO:0016887">
    <property type="term" value="F:ATP hydrolysis activity"/>
    <property type="evidence" value="ECO:0007669"/>
    <property type="project" value="InterPro"/>
</dbReference>
<dbReference type="GO" id="GO:0000400">
    <property type="term" value="F:four-way junction DNA binding"/>
    <property type="evidence" value="ECO:0007669"/>
    <property type="project" value="UniProtKB-UniRule"/>
</dbReference>
<dbReference type="GO" id="GO:0009378">
    <property type="term" value="F:four-way junction helicase activity"/>
    <property type="evidence" value="ECO:0007669"/>
    <property type="project" value="InterPro"/>
</dbReference>
<dbReference type="GO" id="GO:0006310">
    <property type="term" value="P:DNA recombination"/>
    <property type="evidence" value="ECO:0007669"/>
    <property type="project" value="UniProtKB-UniRule"/>
</dbReference>
<dbReference type="GO" id="GO:0006281">
    <property type="term" value="P:DNA repair"/>
    <property type="evidence" value="ECO:0007669"/>
    <property type="project" value="UniProtKB-UniRule"/>
</dbReference>
<dbReference type="CDD" id="cd00009">
    <property type="entry name" value="AAA"/>
    <property type="match status" value="1"/>
</dbReference>
<dbReference type="Gene3D" id="1.10.8.60">
    <property type="match status" value="1"/>
</dbReference>
<dbReference type="Gene3D" id="3.40.50.300">
    <property type="entry name" value="P-loop containing nucleotide triphosphate hydrolases"/>
    <property type="match status" value="1"/>
</dbReference>
<dbReference type="Gene3D" id="1.10.10.10">
    <property type="entry name" value="Winged helix-like DNA-binding domain superfamily/Winged helix DNA-binding domain"/>
    <property type="match status" value="1"/>
</dbReference>
<dbReference type="HAMAP" id="MF_00016">
    <property type="entry name" value="DNA_HJ_migration_RuvB"/>
    <property type="match status" value="1"/>
</dbReference>
<dbReference type="InterPro" id="IPR003593">
    <property type="entry name" value="AAA+_ATPase"/>
</dbReference>
<dbReference type="InterPro" id="IPR041445">
    <property type="entry name" value="AAA_lid_4"/>
</dbReference>
<dbReference type="InterPro" id="IPR004605">
    <property type="entry name" value="DNA_helicase_Holl-junc_RuvB"/>
</dbReference>
<dbReference type="InterPro" id="IPR027417">
    <property type="entry name" value="P-loop_NTPase"/>
</dbReference>
<dbReference type="InterPro" id="IPR008824">
    <property type="entry name" value="RuvB-like_N"/>
</dbReference>
<dbReference type="InterPro" id="IPR008823">
    <property type="entry name" value="RuvB_C"/>
</dbReference>
<dbReference type="InterPro" id="IPR036388">
    <property type="entry name" value="WH-like_DNA-bd_sf"/>
</dbReference>
<dbReference type="InterPro" id="IPR036390">
    <property type="entry name" value="WH_DNA-bd_sf"/>
</dbReference>
<dbReference type="NCBIfam" id="NF000868">
    <property type="entry name" value="PRK00080.1"/>
    <property type="match status" value="1"/>
</dbReference>
<dbReference type="NCBIfam" id="TIGR00635">
    <property type="entry name" value="ruvB"/>
    <property type="match status" value="1"/>
</dbReference>
<dbReference type="PANTHER" id="PTHR42848">
    <property type="match status" value="1"/>
</dbReference>
<dbReference type="PANTHER" id="PTHR42848:SF1">
    <property type="entry name" value="HOLLIDAY JUNCTION BRANCH MIGRATION COMPLEX SUBUNIT RUVB"/>
    <property type="match status" value="1"/>
</dbReference>
<dbReference type="Pfam" id="PF17864">
    <property type="entry name" value="AAA_lid_4"/>
    <property type="match status" value="1"/>
</dbReference>
<dbReference type="Pfam" id="PF05491">
    <property type="entry name" value="RuvB_C"/>
    <property type="match status" value="1"/>
</dbReference>
<dbReference type="Pfam" id="PF05496">
    <property type="entry name" value="RuvB_N"/>
    <property type="match status" value="1"/>
</dbReference>
<dbReference type="SMART" id="SM00382">
    <property type="entry name" value="AAA"/>
    <property type="match status" value="1"/>
</dbReference>
<dbReference type="SUPFAM" id="SSF52540">
    <property type="entry name" value="P-loop containing nucleoside triphosphate hydrolases"/>
    <property type="match status" value="1"/>
</dbReference>
<dbReference type="SUPFAM" id="SSF46785">
    <property type="entry name" value="Winged helix' DNA-binding domain"/>
    <property type="match status" value="1"/>
</dbReference>
<evidence type="ECO:0000255" key="1">
    <source>
        <dbReference type="HAMAP-Rule" id="MF_00016"/>
    </source>
</evidence>
<evidence type="ECO:0000256" key="2">
    <source>
        <dbReference type="SAM" id="MobiDB-lite"/>
    </source>
</evidence>
<protein>
    <recommendedName>
        <fullName evidence="1">Holliday junction branch migration complex subunit RuvB</fullName>
        <ecNumber evidence="1">3.6.4.-</ecNumber>
    </recommendedName>
</protein>
<gene>
    <name evidence="1" type="primary">ruvB</name>
    <name type="ordered locus">lp_2286</name>
</gene>
<organism>
    <name type="scientific">Lactiplantibacillus plantarum (strain ATCC BAA-793 / NCIMB 8826 / WCFS1)</name>
    <name type="common">Lactobacillus plantarum</name>
    <dbReference type="NCBI Taxonomy" id="220668"/>
    <lineage>
        <taxon>Bacteria</taxon>
        <taxon>Bacillati</taxon>
        <taxon>Bacillota</taxon>
        <taxon>Bacilli</taxon>
        <taxon>Lactobacillales</taxon>
        <taxon>Lactobacillaceae</taxon>
        <taxon>Lactiplantibacillus</taxon>
    </lineage>
</organism>
<name>RUVB_LACPL</name>
<sequence length="336" mass="37370">MDDDKLLSGDKADDEEASLEKSLRPQTLAQYIGQARVKHELGVYIEAARKREESLDHVLLYGPPGLGKTTLAMVIANEMQVNIRTTSGPAIEKPGDLVALLNELEPGDILFIDEIHRLPKIVEEMLYSAMEDFFVDIVVGQGPTAHPVHFPLPPFTLIGATTRAGMLSAPLRDRFGIVEHMAYYEVADLEDIVKRTADIFQTSIKPSGAHEIARRSRGTPRIANRLFKRIRDFAEVADQDAIDEAIVARSLTYLRVDDAGLDETDNKLLRTMLEYYDGGPVGLATIAANIGEETDTIAEVVEPYLLQIGFLKRTQRGRVVTIKGYQHLGFPYPENK</sequence>
<reference key="1">
    <citation type="journal article" date="2003" name="Proc. Natl. Acad. Sci. U.S.A.">
        <title>Complete genome sequence of Lactobacillus plantarum WCFS1.</title>
        <authorList>
            <person name="Kleerebezem M."/>
            <person name="Boekhorst J."/>
            <person name="van Kranenburg R."/>
            <person name="Molenaar D."/>
            <person name="Kuipers O.P."/>
            <person name="Leer R."/>
            <person name="Tarchini R."/>
            <person name="Peters S.A."/>
            <person name="Sandbrink H.M."/>
            <person name="Fiers M.W.E.J."/>
            <person name="Stiekema W."/>
            <person name="Klein Lankhorst R.M."/>
            <person name="Bron P.A."/>
            <person name="Hoffer S.M."/>
            <person name="Nierop Groot M.N."/>
            <person name="Kerkhoven R."/>
            <person name="De Vries M."/>
            <person name="Ursing B."/>
            <person name="De Vos W.M."/>
            <person name="Siezen R.J."/>
        </authorList>
    </citation>
    <scope>NUCLEOTIDE SEQUENCE [LARGE SCALE GENOMIC DNA]</scope>
    <source>
        <strain>ATCC BAA-793 / NCIMB 8826 / WCFS1</strain>
    </source>
</reference>
<reference key="2">
    <citation type="journal article" date="2012" name="J. Bacteriol.">
        <title>Complete resequencing and reannotation of the Lactobacillus plantarum WCFS1 genome.</title>
        <authorList>
            <person name="Siezen R.J."/>
            <person name="Francke C."/>
            <person name="Renckens B."/>
            <person name="Boekhorst J."/>
            <person name="Wels M."/>
            <person name="Kleerebezem M."/>
            <person name="van Hijum S.A."/>
        </authorList>
    </citation>
    <scope>NUCLEOTIDE SEQUENCE [LARGE SCALE GENOMIC DNA]</scope>
    <scope>GENOME REANNOTATION</scope>
    <source>
        <strain>ATCC BAA-793 / NCIMB 8826 / WCFS1</strain>
    </source>
</reference>
<proteinExistence type="inferred from homology"/>
<feature type="chain" id="PRO_0000165544" description="Holliday junction branch migration complex subunit RuvB">
    <location>
        <begin position="1"/>
        <end position="336"/>
    </location>
</feature>
<feature type="region of interest" description="Large ATPase domain (RuvB-L)" evidence="1">
    <location>
        <begin position="1"/>
        <end position="184"/>
    </location>
</feature>
<feature type="region of interest" description="Disordered" evidence="2">
    <location>
        <begin position="1"/>
        <end position="21"/>
    </location>
</feature>
<feature type="region of interest" description="Small ATPAse domain (RuvB-S)" evidence="1">
    <location>
        <begin position="185"/>
        <end position="255"/>
    </location>
</feature>
<feature type="region of interest" description="Head domain (RuvB-H)" evidence="1">
    <location>
        <begin position="258"/>
        <end position="336"/>
    </location>
</feature>
<feature type="compositionally biased region" description="Basic and acidic residues" evidence="2">
    <location>
        <begin position="1"/>
        <end position="11"/>
    </location>
</feature>
<feature type="binding site" evidence="1">
    <location>
        <position position="23"/>
    </location>
    <ligand>
        <name>ATP</name>
        <dbReference type="ChEBI" id="CHEBI:30616"/>
    </ligand>
</feature>
<feature type="binding site" evidence="1">
    <location>
        <position position="24"/>
    </location>
    <ligand>
        <name>ATP</name>
        <dbReference type="ChEBI" id="CHEBI:30616"/>
    </ligand>
</feature>
<feature type="binding site" evidence="1">
    <location>
        <position position="65"/>
    </location>
    <ligand>
        <name>ATP</name>
        <dbReference type="ChEBI" id="CHEBI:30616"/>
    </ligand>
</feature>
<feature type="binding site" evidence="1">
    <location>
        <position position="68"/>
    </location>
    <ligand>
        <name>ATP</name>
        <dbReference type="ChEBI" id="CHEBI:30616"/>
    </ligand>
</feature>
<feature type="binding site" evidence="1">
    <location>
        <position position="69"/>
    </location>
    <ligand>
        <name>ATP</name>
        <dbReference type="ChEBI" id="CHEBI:30616"/>
    </ligand>
</feature>
<feature type="binding site" evidence="1">
    <location>
        <position position="69"/>
    </location>
    <ligand>
        <name>Mg(2+)</name>
        <dbReference type="ChEBI" id="CHEBI:18420"/>
    </ligand>
</feature>
<feature type="binding site" evidence="1">
    <location>
        <position position="70"/>
    </location>
    <ligand>
        <name>ATP</name>
        <dbReference type="ChEBI" id="CHEBI:30616"/>
    </ligand>
</feature>
<feature type="binding site" evidence="1">
    <location>
        <begin position="131"/>
        <end position="133"/>
    </location>
    <ligand>
        <name>ATP</name>
        <dbReference type="ChEBI" id="CHEBI:30616"/>
    </ligand>
</feature>
<feature type="binding site" evidence="1">
    <location>
        <position position="174"/>
    </location>
    <ligand>
        <name>ATP</name>
        <dbReference type="ChEBI" id="CHEBI:30616"/>
    </ligand>
</feature>
<feature type="binding site" evidence="1">
    <location>
        <position position="184"/>
    </location>
    <ligand>
        <name>ATP</name>
        <dbReference type="ChEBI" id="CHEBI:30616"/>
    </ligand>
</feature>
<feature type="binding site" evidence="1">
    <location>
        <position position="221"/>
    </location>
    <ligand>
        <name>ATP</name>
        <dbReference type="ChEBI" id="CHEBI:30616"/>
    </ligand>
</feature>
<feature type="binding site" evidence="1">
    <location>
        <position position="313"/>
    </location>
    <ligand>
        <name>DNA</name>
        <dbReference type="ChEBI" id="CHEBI:16991"/>
    </ligand>
</feature>
<feature type="binding site" evidence="1">
    <location>
        <position position="318"/>
    </location>
    <ligand>
        <name>DNA</name>
        <dbReference type="ChEBI" id="CHEBI:16991"/>
    </ligand>
</feature>
<keyword id="KW-0067">ATP-binding</keyword>
<keyword id="KW-0963">Cytoplasm</keyword>
<keyword id="KW-0227">DNA damage</keyword>
<keyword id="KW-0233">DNA recombination</keyword>
<keyword id="KW-0234">DNA repair</keyword>
<keyword id="KW-0238">DNA-binding</keyword>
<keyword id="KW-0378">Hydrolase</keyword>
<keyword id="KW-0547">Nucleotide-binding</keyword>
<keyword id="KW-1185">Reference proteome</keyword>
<comment type="function">
    <text evidence="1">The RuvA-RuvB-RuvC complex processes Holliday junction (HJ) DNA during genetic recombination and DNA repair, while the RuvA-RuvB complex plays an important role in the rescue of blocked DNA replication forks via replication fork reversal (RFR). RuvA specifically binds to HJ cruciform DNA, conferring on it an open structure. The RuvB hexamer acts as an ATP-dependent pump, pulling dsDNA into and through the RuvAB complex. RuvB forms 2 homohexamers on either side of HJ DNA bound by 1 or 2 RuvA tetramers; 4 subunits per hexamer contact DNA at a time. Coordinated motions by a converter formed by DNA-disengaged RuvB subunits stimulates ATP hydrolysis and nucleotide exchange. Immobilization of the converter enables RuvB to convert the ATP-contained energy into a lever motion, pulling 2 nucleotides of DNA out of the RuvA tetramer per ATP hydrolyzed, thus driving DNA branch migration. The RuvB motors rotate together with the DNA substrate, which together with the progressing nucleotide cycle form the mechanistic basis for DNA recombination by continuous HJ branch migration. Branch migration allows RuvC to scan DNA until it finds its consensus sequence, where it cleaves and resolves cruciform DNA.</text>
</comment>
<comment type="catalytic activity">
    <reaction evidence="1">
        <text>ATP + H2O = ADP + phosphate + H(+)</text>
        <dbReference type="Rhea" id="RHEA:13065"/>
        <dbReference type="ChEBI" id="CHEBI:15377"/>
        <dbReference type="ChEBI" id="CHEBI:15378"/>
        <dbReference type="ChEBI" id="CHEBI:30616"/>
        <dbReference type="ChEBI" id="CHEBI:43474"/>
        <dbReference type="ChEBI" id="CHEBI:456216"/>
    </reaction>
</comment>
<comment type="subunit">
    <text evidence="1">Homohexamer. Forms an RuvA(8)-RuvB(12)-Holliday junction (HJ) complex. HJ DNA is sandwiched between 2 RuvA tetramers; dsDNA enters through RuvA and exits via RuvB. An RuvB hexamer assembles on each DNA strand where it exits the tetramer. Each RuvB hexamer is contacted by two RuvA subunits (via domain III) on 2 adjacent RuvB subunits; this complex drives branch migration. In the full resolvosome a probable DNA-RuvA(4)-RuvB(12)-RuvC(2) complex forms which resolves the HJ.</text>
</comment>
<comment type="subcellular location">
    <subcellularLocation>
        <location evidence="1">Cytoplasm</location>
    </subcellularLocation>
</comment>
<comment type="domain">
    <text evidence="1">Has 3 domains, the large (RuvB-L) and small ATPase (RuvB-S) domains and the C-terminal head (RuvB-H) domain. The head domain binds DNA, while the ATPase domains jointly bind ATP, ADP or are empty depending on the state of the subunit in the translocation cycle. During a single DNA translocation step the structure of each domain remains the same, but their relative positions change.</text>
</comment>
<comment type="similarity">
    <text evidence="1">Belongs to the RuvB family.</text>
</comment>
<accession>Q88V03</accession>
<accession>F9UQK3</accession>